<evidence type="ECO:0000255" key="1">
    <source>
        <dbReference type="HAMAP-Rule" id="MF_00600"/>
    </source>
</evidence>
<accession>Q6ARV6</accession>
<name>CH60_DESPS</name>
<comment type="function">
    <text evidence="1">Together with its co-chaperonin GroES, plays an essential role in assisting protein folding. The GroEL-GroES system forms a nano-cage that allows encapsulation of the non-native substrate proteins and provides a physical environment optimized to promote and accelerate protein folding.</text>
</comment>
<comment type="catalytic activity">
    <reaction evidence="1">
        <text>ATP + H2O + a folded polypeptide = ADP + phosphate + an unfolded polypeptide.</text>
        <dbReference type="EC" id="5.6.1.7"/>
    </reaction>
</comment>
<comment type="subunit">
    <text evidence="1">Forms a cylinder of 14 subunits composed of two heptameric rings stacked back-to-back. Interacts with the co-chaperonin GroES.</text>
</comment>
<comment type="subcellular location">
    <subcellularLocation>
        <location evidence="1">Cytoplasm</location>
    </subcellularLocation>
</comment>
<comment type="similarity">
    <text evidence="1">Belongs to the chaperonin (HSP60) family.</text>
</comment>
<dbReference type="EC" id="5.6.1.7" evidence="1"/>
<dbReference type="EMBL" id="CR522870">
    <property type="protein sequence ID" value="CAG34919.1"/>
    <property type="molecule type" value="Genomic_DNA"/>
</dbReference>
<dbReference type="SMR" id="Q6ARV6"/>
<dbReference type="STRING" id="177439.DP0190"/>
<dbReference type="KEGG" id="dps:DP0190"/>
<dbReference type="eggNOG" id="COG0459">
    <property type="taxonomic scope" value="Bacteria"/>
</dbReference>
<dbReference type="HOGENOM" id="CLU_016503_3_0_7"/>
<dbReference type="Proteomes" id="UP000000602">
    <property type="component" value="Chromosome"/>
</dbReference>
<dbReference type="GO" id="GO:0005737">
    <property type="term" value="C:cytoplasm"/>
    <property type="evidence" value="ECO:0007669"/>
    <property type="project" value="UniProtKB-SubCell"/>
</dbReference>
<dbReference type="GO" id="GO:0005524">
    <property type="term" value="F:ATP binding"/>
    <property type="evidence" value="ECO:0007669"/>
    <property type="project" value="UniProtKB-UniRule"/>
</dbReference>
<dbReference type="GO" id="GO:0140662">
    <property type="term" value="F:ATP-dependent protein folding chaperone"/>
    <property type="evidence" value="ECO:0007669"/>
    <property type="project" value="InterPro"/>
</dbReference>
<dbReference type="GO" id="GO:0016853">
    <property type="term" value="F:isomerase activity"/>
    <property type="evidence" value="ECO:0007669"/>
    <property type="project" value="UniProtKB-KW"/>
</dbReference>
<dbReference type="GO" id="GO:0051082">
    <property type="term" value="F:unfolded protein binding"/>
    <property type="evidence" value="ECO:0007669"/>
    <property type="project" value="UniProtKB-UniRule"/>
</dbReference>
<dbReference type="GO" id="GO:0042026">
    <property type="term" value="P:protein refolding"/>
    <property type="evidence" value="ECO:0007669"/>
    <property type="project" value="UniProtKB-UniRule"/>
</dbReference>
<dbReference type="CDD" id="cd03344">
    <property type="entry name" value="GroEL"/>
    <property type="match status" value="1"/>
</dbReference>
<dbReference type="FunFam" id="3.50.7.10:FF:000001">
    <property type="entry name" value="60 kDa chaperonin"/>
    <property type="match status" value="1"/>
</dbReference>
<dbReference type="Gene3D" id="3.50.7.10">
    <property type="entry name" value="GroEL"/>
    <property type="match status" value="1"/>
</dbReference>
<dbReference type="Gene3D" id="1.10.560.10">
    <property type="entry name" value="GroEL-like equatorial domain"/>
    <property type="match status" value="1"/>
</dbReference>
<dbReference type="Gene3D" id="3.30.260.10">
    <property type="entry name" value="TCP-1-like chaperonin intermediate domain"/>
    <property type="match status" value="1"/>
</dbReference>
<dbReference type="HAMAP" id="MF_00600">
    <property type="entry name" value="CH60"/>
    <property type="match status" value="1"/>
</dbReference>
<dbReference type="InterPro" id="IPR018370">
    <property type="entry name" value="Chaperonin_Cpn60_CS"/>
</dbReference>
<dbReference type="InterPro" id="IPR001844">
    <property type="entry name" value="Cpn60/GroEL"/>
</dbReference>
<dbReference type="InterPro" id="IPR002423">
    <property type="entry name" value="Cpn60/GroEL/TCP-1"/>
</dbReference>
<dbReference type="InterPro" id="IPR027409">
    <property type="entry name" value="GroEL-like_apical_dom_sf"/>
</dbReference>
<dbReference type="InterPro" id="IPR027413">
    <property type="entry name" value="GROEL-like_equatorial_sf"/>
</dbReference>
<dbReference type="InterPro" id="IPR027410">
    <property type="entry name" value="TCP-1-like_intermed_sf"/>
</dbReference>
<dbReference type="NCBIfam" id="TIGR02348">
    <property type="entry name" value="GroEL"/>
    <property type="match status" value="1"/>
</dbReference>
<dbReference type="NCBIfam" id="NF000592">
    <property type="entry name" value="PRK00013.1"/>
    <property type="match status" value="1"/>
</dbReference>
<dbReference type="NCBIfam" id="NF009487">
    <property type="entry name" value="PRK12849.1"/>
    <property type="match status" value="1"/>
</dbReference>
<dbReference type="NCBIfam" id="NF009488">
    <property type="entry name" value="PRK12850.1"/>
    <property type="match status" value="1"/>
</dbReference>
<dbReference type="NCBIfam" id="NF009489">
    <property type="entry name" value="PRK12851.1"/>
    <property type="match status" value="1"/>
</dbReference>
<dbReference type="PANTHER" id="PTHR45633">
    <property type="entry name" value="60 KDA HEAT SHOCK PROTEIN, MITOCHONDRIAL"/>
    <property type="match status" value="1"/>
</dbReference>
<dbReference type="Pfam" id="PF00118">
    <property type="entry name" value="Cpn60_TCP1"/>
    <property type="match status" value="1"/>
</dbReference>
<dbReference type="PRINTS" id="PR00298">
    <property type="entry name" value="CHAPERONIN60"/>
</dbReference>
<dbReference type="SUPFAM" id="SSF52029">
    <property type="entry name" value="GroEL apical domain-like"/>
    <property type="match status" value="1"/>
</dbReference>
<dbReference type="SUPFAM" id="SSF48592">
    <property type="entry name" value="GroEL equatorial domain-like"/>
    <property type="match status" value="2"/>
</dbReference>
<dbReference type="PROSITE" id="PS00296">
    <property type="entry name" value="CHAPERONINS_CPN60"/>
    <property type="match status" value="1"/>
</dbReference>
<feature type="chain" id="PRO_0000063356" description="Chaperonin GroEL">
    <location>
        <begin position="1"/>
        <end position="518"/>
    </location>
</feature>
<feature type="binding site" evidence="1">
    <location>
        <begin position="30"/>
        <end position="33"/>
    </location>
    <ligand>
        <name>ATP</name>
        <dbReference type="ChEBI" id="CHEBI:30616"/>
    </ligand>
</feature>
<feature type="binding site" evidence="1">
    <location>
        <position position="51"/>
    </location>
    <ligand>
        <name>ATP</name>
        <dbReference type="ChEBI" id="CHEBI:30616"/>
    </ligand>
</feature>
<feature type="binding site" evidence="1">
    <location>
        <begin position="87"/>
        <end position="91"/>
    </location>
    <ligand>
        <name>ATP</name>
        <dbReference type="ChEBI" id="CHEBI:30616"/>
    </ligand>
</feature>
<feature type="binding site" evidence="1">
    <location>
        <position position="415"/>
    </location>
    <ligand>
        <name>ATP</name>
        <dbReference type="ChEBI" id="CHEBI:30616"/>
    </ligand>
</feature>
<reference key="1">
    <citation type="journal article" date="2004" name="Environ. Microbiol.">
        <title>The genome of Desulfotalea psychrophila, a sulfate-reducing bacterium from permanently cold Arctic sediments.</title>
        <authorList>
            <person name="Rabus R."/>
            <person name="Ruepp A."/>
            <person name="Frickey T."/>
            <person name="Rattei T."/>
            <person name="Fartmann B."/>
            <person name="Stark M."/>
            <person name="Bauer M."/>
            <person name="Zibat A."/>
            <person name="Lombardot T."/>
            <person name="Becker I."/>
            <person name="Amann J."/>
            <person name="Gellner K."/>
            <person name="Teeling H."/>
            <person name="Leuschner W.D."/>
            <person name="Gloeckner F.-O."/>
            <person name="Lupas A.N."/>
            <person name="Amann R."/>
            <person name="Klenk H.-P."/>
        </authorList>
    </citation>
    <scope>NUCLEOTIDE SEQUENCE [LARGE SCALE GENOMIC DNA]</scope>
    <source>
        <strain>DSM 12343 / LSv54</strain>
    </source>
</reference>
<organism>
    <name type="scientific">Desulfotalea psychrophila (strain LSv54 / DSM 12343)</name>
    <dbReference type="NCBI Taxonomy" id="177439"/>
    <lineage>
        <taxon>Bacteria</taxon>
        <taxon>Pseudomonadati</taxon>
        <taxon>Thermodesulfobacteriota</taxon>
        <taxon>Desulfobulbia</taxon>
        <taxon>Desulfobulbales</taxon>
        <taxon>Desulfocapsaceae</taxon>
        <taxon>Desulfotalea</taxon>
    </lineage>
</organism>
<proteinExistence type="inferred from homology"/>
<protein>
    <recommendedName>
        <fullName evidence="1">Chaperonin GroEL</fullName>
        <ecNumber evidence="1">5.6.1.7</ecNumber>
    </recommendedName>
    <alternativeName>
        <fullName evidence="1">60 kDa chaperonin</fullName>
    </alternativeName>
    <alternativeName>
        <fullName evidence="1">Chaperonin-60</fullName>
        <shortName evidence="1">Cpn60</shortName>
    </alternativeName>
</protein>
<keyword id="KW-0067">ATP-binding</keyword>
<keyword id="KW-0143">Chaperone</keyword>
<keyword id="KW-0963">Cytoplasm</keyword>
<keyword id="KW-0413">Isomerase</keyword>
<keyword id="KW-0547">Nucleotide-binding</keyword>
<keyword id="KW-1185">Reference proteome</keyword>
<gene>
    <name evidence="1" type="primary">groEL</name>
    <name evidence="1" type="synonym">groL</name>
    <name type="ordered locus">DP0190</name>
</gene>
<sequence>MAGKDIKYGVKARESVLIGVNTLANAVKVTLGPKGRNVLIEKSFGAPTITKDGVSVAKEIELKDKFENMGAQMVKEVASKTSDVAGDGTTTATVLAQAIYTEGVKLVAAGGNPMEIKRGIDKGVEAVIAELRNIATPTKEQKEIAQVGTISANSDETIGNIIAEAMDKVGKEGVITVEEAKSMETTLDVVEGMQFDRGYLSPYFVTDPERMEVIMDDPYILLVEKKVSNMKDLLPVLEQVAKMGKGLFILAEDVDGEALATLVVNKLRGTINVAAVKAPGFGDRRKAMLEDIAILTGGQVISEDLGIKLENVTLNDLGTCKRIVTDKDATTIVDGAGDAAQLSSRVKQIHAQIADTTSDYDREKLQERLAKLIGGVAVINVGAATEIEMKEKKGRVEDALNATRAAVEEGVVPGGGVAYMRWLDALEALHLEGEQELGKKILSVPLKSLFVRLPIMLAVKVLLLLMQLRSLKDQTVSTQLPKFTKTLSLQVLSILPRLPVQPCKTQLLYPVCFSPPSV</sequence>